<feature type="chain" id="PRO_0000161301" description="Fumarate hydratase class II">
    <location>
        <begin position="1"/>
        <end position="464"/>
    </location>
</feature>
<feature type="active site" description="Proton donor/acceptor" evidence="1">
    <location>
        <position position="186"/>
    </location>
</feature>
<feature type="active site" evidence="1">
    <location>
        <position position="316"/>
    </location>
</feature>
<feature type="binding site" evidence="1">
    <location>
        <begin position="96"/>
        <end position="98"/>
    </location>
    <ligand>
        <name>substrate</name>
    </ligand>
</feature>
<feature type="binding site" description="in site B" evidence="1">
    <location>
        <begin position="127"/>
        <end position="130"/>
    </location>
    <ligand>
        <name>substrate</name>
    </ligand>
</feature>
<feature type="binding site" evidence="1">
    <location>
        <begin position="137"/>
        <end position="139"/>
    </location>
    <ligand>
        <name>substrate</name>
    </ligand>
</feature>
<feature type="binding site" evidence="1">
    <location>
        <position position="185"/>
    </location>
    <ligand>
        <name>substrate</name>
    </ligand>
</feature>
<feature type="binding site" evidence="1">
    <location>
        <position position="317"/>
    </location>
    <ligand>
        <name>substrate</name>
    </ligand>
</feature>
<feature type="binding site" evidence="1">
    <location>
        <begin position="322"/>
        <end position="324"/>
    </location>
    <ligand>
        <name>substrate</name>
    </ligand>
</feature>
<feature type="site" description="Important for catalytic activity" evidence="1">
    <location>
        <position position="329"/>
    </location>
</feature>
<organism>
    <name type="scientific">Pseudomonas putida (strain ATCC 47054 / DSM 6125 / CFBP 8728 / NCIMB 11950 / KT2440)</name>
    <dbReference type="NCBI Taxonomy" id="160488"/>
    <lineage>
        <taxon>Bacteria</taxon>
        <taxon>Pseudomonadati</taxon>
        <taxon>Pseudomonadota</taxon>
        <taxon>Gammaproteobacteria</taxon>
        <taxon>Pseudomonadales</taxon>
        <taxon>Pseudomonadaceae</taxon>
        <taxon>Pseudomonas</taxon>
    </lineage>
</organism>
<gene>
    <name evidence="1" type="primary">fumC</name>
    <name type="synonym">fumC-2</name>
    <name type="ordered locus">PP_1755</name>
</gene>
<name>FUMC_PSEPK</name>
<keyword id="KW-0963">Cytoplasm</keyword>
<keyword id="KW-0456">Lyase</keyword>
<keyword id="KW-1185">Reference proteome</keyword>
<keyword id="KW-0816">Tricarboxylic acid cycle</keyword>
<reference key="1">
    <citation type="journal article" date="2002" name="Environ. Microbiol.">
        <title>Complete genome sequence and comparative analysis of the metabolically versatile Pseudomonas putida KT2440.</title>
        <authorList>
            <person name="Nelson K.E."/>
            <person name="Weinel C."/>
            <person name="Paulsen I.T."/>
            <person name="Dodson R.J."/>
            <person name="Hilbert H."/>
            <person name="Martins dos Santos V.A.P."/>
            <person name="Fouts D.E."/>
            <person name="Gill S.R."/>
            <person name="Pop M."/>
            <person name="Holmes M."/>
            <person name="Brinkac L.M."/>
            <person name="Beanan M.J."/>
            <person name="DeBoy R.T."/>
            <person name="Daugherty S.C."/>
            <person name="Kolonay J.F."/>
            <person name="Madupu R."/>
            <person name="Nelson W.C."/>
            <person name="White O."/>
            <person name="Peterson J.D."/>
            <person name="Khouri H.M."/>
            <person name="Hance I."/>
            <person name="Chris Lee P."/>
            <person name="Holtzapple E.K."/>
            <person name="Scanlan D."/>
            <person name="Tran K."/>
            <person name="Moazzez A."/>
            <person name="Utterback T.R."/>
            <person name="Rizzo M."/>
            <person name="Lee K."/>
            <person name="Kosack D."/>
            <person name="Moestl D."/>
            <person name="Wedler H."/>
            <person name="Lauber J."/>
            <person name="Stjepandic D."/>
            <person name="Hoheisel J."/>
            <person name="Straetz M."/>
            <person name="Heim S."/>
            <person name="Kiewitz C."/>
            <person name="Eisen J.A."/>
            <person name="Timmis K.N."/>
            <person name="Duesterhoeft A."/>
            <person name="Tuemmler B."/>
            <person name="Fraser C.M."/>
        </authorList>
    </citation>
    <scope>NUCLEOTIDE SEQUENCE [LARGE SCALE GENOMIC DNA]</scope>
    <source>
        <strain>ATCC 47054 / DSM 6125 / CFBP 8728 / NCIMB 11950 / KT2440</strain>
    </source>
</reference>
<sequence length="464" mass="49131">MSRIETDSLGPVEVPEDAYWGAQTQRSLINFAIGKERMPLAVLHALALIKKAAARVNDRNGDLPADIARLIEQAADEVLDGQHDDQFPLVVWQTGSGTQSNMNVNEVIAGRANELAGKGRGGKAPVHPNDHVNRSQSSNDCFPTAMHIAAAQAVHEKLLPAVTELSSGLAELSMRHHKLVKTGRTHMMDATPITFGQEVSAFVAQLDYAQRAIRATLPAVCELAQGGTAVGTGLNAPQGFAEAIAAELAALSGLPFITAPNKFAALAGHEPLTSLAGALKTLAVALMKIANDLRLLGSGPRAGLAEVRLPANEPGSSIMPGKVNPTQCEALSMLACQVLGNDAAIGFAASQGHLQLNVFKPVIIHNLLQSIELLADGCRNFQQHCVAGIEPDAEQMAAHLERGLMLVTALNPHIGYDKAAEIAKKAYSEGTTLREAALALKYLTNEQFDQWVRPENMLAPGGKG</sequence>
<accession>Q88M20</accession>
<comment type="function">
    <text evidence="1">Involved in the TCA cycle. Catalyzes the stereospecific interconversion of fumarate to L-malate.</text>
</comment>
<comment type="catalytic activity">
    <reaction evidence="1">
        <text>(S)-malate = fumarate + H2O</text>
        <dbReference type="Rhea" id="RHEA:12460"/>
        <dbReference type="ChEBI" id="CHEBI:15377"/>
        <dbReference type="ChEBI" id="CHEBI:15589"/>
        <dbReference type="ChEBI" id="CHEBI:29806"/>
        <dbReference type="EC" id="4.2.1.2"/>
    </reaction>
</comment>
<comment type="pathway">
    <text evidence="1">Carbohydrate metabolism; tricarboxylic acid cycle; (S)-malate from fumarate: step 1/1.</text>
</comment>
<comment type="subunit">
    <text evidence="1">Homotetramer.</text>
</comment>
<comment type="subcellular location">
    <subcellularLocation>
        <location evidence="1">Cytoplasm</location>
    </subcellularLocation>
</comment>
<comment type="miscellaneous">
    <text evidence="1">There are 2 substrate-binding sites: the catalytic A site, and the non-catalytic B site that may play a role in the transfer of substrate or product between the active site and the solvent. Alternatively, the B site may bind allosteric effectors.</text>
</comment>
<comment type="similarity">
    <text evidence="1">Belongs to the class-II fumarase/aspartase family. Fumarase subfamily.</text>
</comment>
<dbReference type="EC" id="4.2.1.2" evidence="1"/>
<dbReference type="EMBL" id="AE015451">
    <property type="protein sequence ID" value="AAN67375.1"/>
    <property type="molecule type" value="Genomic_DNA"/>
</dbReference>
<dbReference type="RefSeq" id="NP_743911.1">
    <property type="nucleotide sequence ID" value="NC_002947.4"/>
</dbReference>
<dbReference type="RefSeq" id="WP_010952795.1">
    <property type="nucleotide sequence ID" value="NZ_CP169744.1"/>
</dbReference>
<dbReference type="SMR" id="Q88M20"/>
<dbReference type="STRING" id="160488.PP_1755"/>
<dbReference type="PaxDb" id="160488-PP_1755"/>
<dbReference type="KEGG" id="ppu:PP_1755"/>
<dbReference type="PATRIC" id="fig|160488.4.peg.1850"/>
<dbReference type="eggNOG" id="COG0114">
    <property type="taxonomic scope" value="Bacteria"/>
</dbReference>
<dbReference type="HOGENOM" id="CLU_021594_4_1_6"/>
<dbReference type="OrthoDB" id="9802809at2"/>
<dbReference type="PhylomeDB" id="Q88M20"/>
<dbReference type="BioCyc" id="PPUT160488:G1G01-1856-MONOMER"/>
<dbReference type="UniPathway" id="UPA00223">
    <property type="reaction ID" value="UER01007"/>
</dbReference>
<dbReference type="Proteomes" id="UP000000556">
    <property type="component" value="Chromosome"/>
</dbReference>
<dbReference type="GO" id="GO:0005737">
    <property type="term" value="C:cytoplasm"/>
    <property type="evidence" value="ECO:0007669"/>
    <property type="project" value="UniProtKB-SubCell"/>
</dbReference>
<dbReference type="GO" id="GO:0004333">
    <property type="term" value="F:fumarate hydratase activity"/>
    <property type="evidence" value="ECO:0007669"/>
    <property type="project" value="UniProtKB-UniRule"/>
</dbReference>
<dbReference type="GO" id="GO:0006106">
    <property type="term" value="P:fumarate metabolic process"/>
    <property type="evidence" value="ECO:0007669"/>
    <property type="project" value="InterPro"/>
</dbReference>
<dbReference type="GO" id="GO:0006108">
    <property type="term" value="P:malate metabolic process"/>
    <property type="evidence" value="ECO:0007669"/>
    <property type="project" value="TreeGrafter"/>
</dbReference>
<dbReference type="GO" id="GO:0006099">
    <property type="term" value="P:tricarboxylic acid cycle"/>
    <property type="evidence" value="ECO:0007669"/>
    <property type="project" value="UniProtKB-UniRule"/>
</dbReference>
<dbReference type="CDD" id="cd01362">
    <property type="entry name" value="Fumarase_classII"/>
    <property type="match status" value="1"/>
</dbReference>
<dbReference type="FunFam" id="1.10.40.30:FF:000002">
    <property type="entry name" value="Fumarate hydratase class II"/>
    <property type="match status" value="1"/>
</dbReference>
<dbReference type="FunFam" id="1.10.275.10:FF:000001">
    <property type="entry name" value="Fumarate hydratase, mitochondrial"/>
    <property type="match status" value="1"/>
</dbReference>
<dbReference type="FunFam" id="1.20.200.10:FF:000001">
    <property type="entry name" value="Fumarate hydratase, mitochondrial"/>
    <property type="match status" value="1"/>
</dbReference>
<dbReference type="Gene3D" id="1.10.40.30">
    <property type="entry name" value="Fumarase/aspartase (C-terminal domain)"/>
    <property type="match status" value="1"/>
</dbReference>
<dbReference type="Gene3D" id="1.20.200.10">
    <property type="entry name" value="Fumarase/aspartase (Central domain)"/>
    <property type="match status" value="1"/>
</dbReference>
<dbReference type="Gene3D" id="1.10.275.10">
    <property type="entry name" value="Fumarase/aspartase (N-terminal domain)"/>
    <property type="match status" value="1"/>
</dbReference>
<dbReference type="HAMAP" id="MF_00743">
    <property type="entry name" value="FumaraseC"/>
    <property type="match status" value="1"/>
</dbReference>
<dbReference type="InterPro" id="IPR005677">
    <property type="entry name" value="Fum_hydII"/>
</dbReference>
<dbReference type="InterPro" id="IPR024083">
    <property type="entry name" value="Fumarase/histidase_N"/>
</dbReference>
<dbReference type="InterPro" id="IPR018951">
    <property type="entry name" value="Fumarase_C_C"/>
</dbReference>
<dbReference type="InterPro" id="IPR020557">
    <property type="entry name" value="Fumarate_lyase_CS"/>
</dbReference>
<dbReference type="InterPro" id="IPR000362">
    <property type="entry name" value="Fumarate_lyase_fam"/>
</dbReference>
<dbReference type="InterPro" id="IPR022761">
    <property type="entry name" value="Fumarate_lyase_N"/>
</dbReference>
<dbReference type="InterPro" id="IPR008948">
    <property type="entry name" value="L-Aspartase-like"/>
</dbReference>
<dbReference type="NCBIfam" id="TIGR00979">
    <property type="entry name" value="fumC_II"/>
    <property type="match status" value="1"/>
</dbReference>
<dbReference type="NCBIfam" id="NF008909">
    <property type="entry name" value="PRK12273.1"/>
    <property type="match status" value="1"/>
</dbReference>
<dbReference type="NCBIfam" id="NF009089">
    <property type="entry name" value="PRK12425.1"/>
    <property type="match status" value="1"/>
</dbReference>
<dbReference type="PANTHER" id="PTHR11444">
    <property type="entry name" value="ASPARTATEAMMONIA/ARGININOSUCCINATE/ADENYLOSUCCINATE LYASE"/>
    <property type="match status" value="1"/>
</dbReference>
<dbReference type="PANTHER" id="PTHR11444:SF1">
    <property type="entry name" value="FUMARATE HYDRATASE, MITOCHONDRIAL"/>
    <property type="match status" value="1"/>
</dbReference>
<dbReference type="Pfam" id="PF10415">
    <property type="entry name" value="FumaraseC_C"/>
    <property type="match status" value="1"/>
</dbReference>
<dbReference type="Pfam" id="PF00206">
    <property type="entry name" value="Lyase_1"/>
    <property type="match status" value="1"/>
</dbReference>
<dbReference type="PRINTS" id="PR00149">
    <property type="entry name" value="FUMRATELYASE"/>
</dbReference>
<dbReference type="SUPFAM" id="SSF48557">
    <property type="entry name" value="L-aspartase-like"/>
    <property type="match status" value="1"/>
</dbReference>
<dbReference type="PROSITE" id="PS00163">
    <property type="entry name" value="FUMARATE_LYASES"/>
    <property type="match status" value="1"/>
</dbReference>
<protein>
    <recommendedName>
        <fullName evidence="1">Fumarate hydratase class II</fullName>
        <shortName evidence="1">Fumarase C</shortName>
        <ecNumber evidence="1">4.2.1.2</ecNumber>
    </recommendedName>
    <alternativeName>
        <fullName evidence="1">Aerobic fumarase</fullName>
    </alternativeName>
    <alternativeName>
        <fullName evidence="1">Iron-independent fumarase</fullName>
    </alternativeName>
</protein>
<proteinExistence type="inferred from homology"/>
<evidence type="ECO:0000255" key="1">
    <source>
        <dbReference type="HAMAP-Rule" id="MF_00743"/>
    </source>
</evidence>